<gene>
    <name type="primary">BICDL2</name>
    <name type="synonym">BICDR2</name>
    <name type="synonym">CCDC64B</name>
</gene>
<feature type="chain" id="PRO_0000302861" description="BICD family-like cargo adapter 2">
    <location>
        <begin position="1"/>
        <end position="508"/>
    </location>
</feature>
<feature type="region of interest" description="Disordered" evidence="3">
    <location>
        <begin position="1"/>
        <end position="27"/>
    </location>
</feature>
<feature type="region of interest" description="Disordered" evidence="3">
    <location>
        <begin position="132"/>
        <end position="152"/>
    </location>
</feature>
<feature type="region of interest" description="Disordered" evidence="3">
    <location>
        <begin position="300"/>
        <end position="351"/>
    </location>
</feature>
<feature type="region of interest" description="Disordered" evidence="3">
    <location>
        <begin position="470"/>
        <end position="491"/>
    </location>
</feature>
<feature type="coiled-coil region" evidence="2">
    <location>
        <begin position="64"/>
        <end position="300"/>
    </location>
</feature>
<feature type="coiled-coil region" evidence="2">
    <location>
        <begin position="353"/>
        <end position="458"/>
    </location>
</feature>
<feature type="compositionally biased region" description="Low complexity" evidence="3">
    <location>
        <begin position="1"/>
        <end position="22"/>
    </location>
</feature>
<feature type="compositionally biased region" description="Basic and acidic residues" evidence="3">
    <location>
        <begin position="135"/>
        <end position="149"/>
    </location>
</feature>
<feature type="compositionally biased region" description="Low complexity" evidence="3">
    <location>
        <begin position="473"/>
        <end position="489"/>
    </location>
</feature>
<feature type="splice variant" id="VSP_027976" description="In isoform 2." evidence="6">
    <location>
        <begin position="1"/>
        <end position="207"/>
    </location>
</feature>
<feature type="sequence variant" id="VAR_060543" description="In dbSNP:rs7204908." evidence="4">
    <original>Q</original>
    <variation>E</variation>
    <location>
        <position position="55"/>
    </location>
</feature>
<feature type="sequence variant" id="VAR_034978" description="In dbSNP:rs2244494." evidence="4 5">
    <original>Q</original>
    <variation>R</variation>
    <location>
        <position position="273"/>
    </location>
</feature>
<sequence>MSSPDGPSFPSGPLSGGASPSGDEGFFPFVLERRDSFLGGGPGPEEPEDLALQLQQKEKDLLLAAELGKMLLERNEELRRQLETLSAQHLEREERLQQENHELRRGLAARGAEWEARAVELEGDVEALRAQLGEQRSEQQDSGRERARALSELSEQNLRLSQQLAQASQTEQELQRELDALRGQCQAQALAGAELRTRLESLQGENQMLQSRRQDLEAQIRGLREEVEKGEGRLQTTHEELLLLRRERREHSLELERARSEAGEALSALRRLQRRVSELEEESRLQDADVSAASLQSELAHSLDDGDQGQGADAPGDTPTTRSPKTRKASSPQPSPPEEILEPPKKRTSLSPAEILEEKEVEVAKLQDEISLQQAELQSLREELQRQKELRAQEDPGEALHSALSDRDEAVNKALELSLQLNRVSLERDSLSRELLRAIRQKVALTQELEAWQDDMQVVIGQQLRSQRQKELSASASSSTPRRAAPRFSLRLGPGPAGGFLSNLFRRT</sequence>
<organism>
    <name type="scientific">Homo sapiens</name>
    <name type="common">Human</name>
    <dbReference type="NCBI Taxonomy" id="9606"/>
    <lineage>
        <taxon>Eukaryota</taxon>
        <taxon>Metazoa</taxon>
        <taxon>Chordata</taxon>
        <taxon>Craniata</taxon>
        <taxon>Vertebrata</taxon>
        <taxon>Euteleostomi</taxon>
        <taxon>Mammalia</taxon>
        <taxon>Eutheria</taxon>
        <taxon>Euarchontoglires</taxon>
        <taxon>Primates</taxon>
        <taxon>Haplorrhini</taxon>
        <taxon>Catarrhini</taxon>
        <taxon>Hominidae</taxon>
        <taxon>Homo</taxon>
    </lineage>
</organism>
<comment type="subunit">
    <text evidence="1">Interacts with RAB13.</text>
</comment>
<comment type="interaction">
    <interactant intactId="EBI-10171799">
        <id>A1A5D9</id>
    </interactant>
    <interactant intactId="EBI-10989614">
        <id>Q9BZZ5-2</id>
        <label>API5</label>
    </interactant>
    <organismsDiffer>false</organismsDiffer>
    <experiments>3</experiments>
</comment>
<comment type="interaction">
    <interactant intactId="EBI-10171799">
        <id>A1A5D9</id>
    </interactant>
    <interactant intactId="EBI-624648">
        <id>Q00537</id>
        <label>CDK17</label>
    </interactant>
    <organismsDiffer>false</organismsDiffer>
    <experiments>3</experiments>
</comment>
<comment type="interaction">
    <interactant intactId="EBI-10171799">
        <id>A1A5D9</id>
    </interactant>
    <interactant intactId="EBI-349854">
        <id>P13569</id>
        <label>CFTR</label>
    </interactant>
    <organismsDiffer>false</organismsDiffer>
    <experiments>3</experiments>
</comment>
<comment type="interaction">
    <interactant intactId="EBI-10171799">
        <id>A1A5D9</id>
    </interactant>
    <interactant intactId="EBI-1643885">
        <id>Q6P597</id>
        <label>KLC3</label>
    </interactant>
    <organismsDiffer>false</organismsDiffer>
    <experiments>4</experiments>
</comment>
<comment type="interaction">
    <interactant intactId="EBI-10171799">
        <id>A1A5D9</id>
    </interactant>
    <interactant intactId="EBI-12076930">
        <id>Q6P597-3</id>
        <label>KLC3</label>
    </interactant>
    <organismsDiffer>false</organismsDiffer>
    <experiments>3</experiments>
</comment>
<comment type="interaction">
    <interactant intactId="EBI-10171799">
        <id>A1A5D9</id>
    </interactant>
    <interactant intactId="EBI-9087684">
        <id>Q13835-2</id>
        <label>PKP1</label>
    </interactant>
    <organismsDiffer>false</organismsDiffer>
    <experiments>3</experiments>
</comment>
<comment type="interaction">
    <interactant intactId="EBI-10171799">
        <id>A1A5D9</id>
    </interactant>
    <interactant intactId="EBI-358122">
        <id>P32969</id>
        <label>RPL9P9</label>
    </interactant>
    <organismsDiffer>false</organismsDiffer>
    <experiments>3</experiments>
</comment>
<comment type="interaction">
    <interactant intactId="EBI-10171799">
        <id>A1A5D9</id>
    </interactant>
    <interactant intactId="EBI-10241197">
        <id>Q3SY00</id>
        <label>TSGA10IP</label>
    </interactant>
    <organismsDiffer>false</organismsDiffer>
    <experiments>3</experiments>
</comment>
<comment type="alternative products">
    <event type="alternative splicing"/>
    <isoform>
        <id>A1A5D9-1</id>
        <name>1</name>
        <sequence type="displayed"/>
    </isoform>
    <isoform>
        <id>A1A5D9-2</id>
        <name>2</name>
        <sequence type="described" ref="VSP_027976"/>
    </isoform>
</comment>
<comment type="similarity">
    <text evidence="7">Belongs to the BICDR family.</text>
</comment>
<keyword id="KW-0025">Alternative splicing</keyword>
<keyword id="KW-0175">Coiled coil</keyword>
<keyword id="KW-1267">Proteomics identification</keyword>
<keyword id="KW-1185">Reference proteome</keyword>
<accession>A1A5D9</accession>
<accession>Q658L9</accession>
<dbReference type="EMBL" id="AL833749">
    <property type="protein sequence ID" value="CAH56245.1"/>
    <property type="molecule type" value="mRNA"/>
</dbReference>
<dbReference type="EMBL" id="AC108134">
    <property type="status" value="NOT_ANNOTATED_CDS"/>
    <property type="molecule type" value="Genomic_DNA"/>
</dbReference>
<dbReference type="EMBL" id="BC128602">
    <property type="protein sequence ID" value="AAI28603.1"/>
    <property type="molecule type" value="mRNA"/>
</dbReference>
<dbReference type="CCDS" id="CCDS45393.1">
    <molecule id="A1A5D9-1"/>
</dbReference>
<dbReference type="RefSeq" id="NP_001096645.1">
    <molecule id="A1A5D9-1"/>
    <property type="nucleotide sequence ID" value="NM_001103175.2"/>
</dbReference>
<dbReference type="RefSeq" id="NP_001356596.1">
    <molecule id="A1A5D9-1"/>
    <property type="nucleotide sequence ID" value="NM_001369667.1"/>
</dbReference>
<dbReference type="RefSeq" id="XP_005255192.1">
    <molecule id="A1A5D9-1"/>
    <property type="nucleotide sequence ID" value="XM_005255135.5"/>
</dbReference>
<dbReference type="RefSeq" id="XP_054235650.1">
    <molecule id="A1A5D9-1"/>
    <property type="nucleotide sequence ID" value="XM_054379675.1"/>
</dbReference>
<dbReference type="SMR" id="A1A5D9"/>
<dbReference type="BioGRID" id="126987">
    <property type="interactions" value="14"/>
</dbReference>
<dbReference type="FunCoup" id="A1A5D9">
    <property type="interactions" value="13"/>
</dbReference>
<dbReference type="IntAct" id="A1A5D9">
    <property type="interactions" value="12"/>
</dbReference>
<dbReference type="MINT" id="A1A5D9"/>
<dbReference type="STRING" id="9606.ENSP00000459043"/>
<dbReference type="GlyGen" id="A1A5D9">
    <property type="glycosylation" value="1 site, 1 O-linked glycan (1 site)"/>
</dbReference>
<dbReference type="iPTMnet" id="A1A5D9"/>
<dbReference type="PhosphoSitePlus" id="A1A5D9"/>
<dbReference type="BioMuta" id="BICDL2"/>
<dbReference type="jPOST" id="A1A5D9"/>
<dbReference type="MassIVE" id="A1A5D9"/>
<dbReference type="PaxDb" id="9606-ENSP00000459043"/>
<dbReference type="PeptideAtlas" id="A1A5D9"/>
<dbReference type="ProteomicsDB" id="117">
    <molecule id="A1A5D9-1"/>
</dbReference>
<dbReference type="ProteomicsDB" id="118">
    <molecule id="A1A5D9-2"/>
</dbReference>
<dbReference type="Antibodypedia" id="52456">
    <property type="antibodies" value="26 antibodies from 10 providers"/>
</dbReference>
<dbReference type="DNASU" id="146439"/>
<dbReference type="Ensembl" id="ENST00000389347.4">
    <molecule id="A1A5D9-1"/>
    <property type="protein sequence ID" value="ENSP00000373998.4"/>
    <property type="gene ID" value="ENSG00000162069.16"/>
</dbReference>
<dbReference type="Ensembl" id="ENST00000572449.6">
    <molecule id="A1A5D9-1"/>
    <property type="protein sequence ID" value="ENSP00000459043.1"/>
    <property type="gene ID" value="ENSG00000162069.16"/>
</dbReference>
<dbReference type="Ensembl" id="ENST00000573514.5">
    <molecule id="A1A5D9-2"/>
    <property type="protein sequence ID" value="ENSP00000461724.1"/>
    <property type="gene ID" value="ENSG00000162069.16"/>
</dbReference>
<dbReference type="GeneID" id="146439"/>
<dbReference type="KEGG" id="hsa:146439"/>
<dbReference type="MANE-Select" id="ENST00000572449.6">
    <property type="protein sequence ID" value="ENSP00000459043.1"/>
    <property type="RefSeq nucleotide sequence ID" value="NM_001369667.1"/>
    <property type="RefSeq protein sequence ID" value="NP_001356596.1"/>
</dbReference>
<dbReference type="UCSC" id="uc002cte.5">
    <molecule id="A1A5D9-1"/>
    <property type="organism name" value="human"/>
</dbReference>
<dbReference type="AGR" id="HGNC:33584"/>
<dbReference type="CTD" id="146439"/>
<dbReference type="GeneCards" id="BICDL2"/>
<dbReference type="HGNC" id="HGNC:33584">
    <property type="gene designation" value="BICDL2"/>
</dbReference>
<dbReference type="HPA" id="ENSG00000162069">
    <property type="expression patterns" value="Tissue enhanced (esophagus, pancreas)"/>
</dbReference>
<dbReference type="MIM" id="617003">
    <property type="type" value="gene"/>
</dbReference>
<dbReference type="neXtProt" id="NX_A1A5D9"/>
<dbReference type="OpenTargets" id="ENSG00000162069"/>
<dbReference type="PharmGKB" id="PA162381686"/>
<dbReference type="VEuPathDB" id="HostDB:ENSG00000162069"/>
<dbReference type="eggNOG" id="ENOG502QRVU">
    <property type="taxonomic scope" value="Eukaryota"/>
</dbReference>
<dbReference type="GeneTree" id="ENSGT00940000160797"/>
<dbReference type="HOGENOM" id="CLU_924265_0_0_1"/>
<dbReference type="InParanoid" id="A1A5D9"/>
<dbReference type="OrthoDB" id="9451547at2759"/>
<dbReference type="PAN-GO" id="A1A5D9">
    <property type="GO annotations" value="2 GO annotations based on evolutionary models"/>
</dbReference>
<dbReference type="PhylomeDB" id="A1A5D9"/>
<dbReference type="TreeFam" id="TF326671"/>
<dbReference type="PathwayCommons" id="A1A5D9"/>
<dbReference type="SignaLink" id="A1A5D9"/>
<dbReference type="BioGRID-ORCS" id="146439">
    <property type="hits" value="74 hits in 1138 CRISPR screens"/>
</dbReference>
<dbReference type="GenomeRNAi" id="146439"/>
<dbReference type="Pharos" id="A1A5D9">
    <property type="development level" value="Tdark"/>
</dbReference>
<dbReference type="PRO" id="PR:A1A5D9"/>
<dbReference type="Proteomes" id="UP000005640">
    <property type="component" value="Chromosome 16"/>
</dbReference>
<dbReference type="RNAct" id="A1A5D9">
    <property type="molecule type" value="protein"/>
</dbReference>
<dbReference type="Bgee" id="ENSG00000162069">
    <property type="expression patterns" value="Expressed in lower esophagus mucosa and 128 other cell types or tissues"/>
</dbReference>
<dbReference type="ExpressionAtlas" id="A1A5D9">
    <property type="expression patterns" value="baseline and differential"/>
</dbReference>
<dbReference type="GO" id="GO:0005737">
    <property type="term" value="C:cytoplasm"/>
    <property type="evidence" value="ECO:0007669"/>
    <property type="project" value="GOC"/>
</dbReference>
<dbReference type="GO" id="GO:0031267">
    <property type="term" value="F:small GTPase binding"/>
    <property type="evidence" value="ECO:0007669"/>
    <property type="project" value="Ensembl"/>
</dbReference>
<dbReference type="GO" id="GO:0055107">
    <property type="term" value="P:Golgi to secretory granule transport"/>
    <property type="evidence" value="ECO:0000318"/>
    <property type="project" value="GO_Central"/>
</dbReference>
<dbReference type="GO" id="GO:0047496">
    <property type="term" value="P:vesicle transport along microtubule"/>
    <property type="evidence" value="ECO:0000318"/>
    <property type="project" value="GO_Central"/>
</dbReference>
<dbReference type="InterPro" id="IPR051149">
    <property type="entry name" value="Spindly/BICDR_Dynein_Adapter"/>
</dbReference>
<dbReference type="PANTHER" id="PTHR32123">
    <property type="entry name" value="BICD FAMILY-LIKE CARGO ADAPTER"/>
    <property type="match status" value="1"/>
</dbReference>
<dbReference type="PANTHER" id="PTHR32123:SF11">
    <property type="entry name" value="BICD FAMILY-LIKE CARGO ADAPTER 2-RELATED"/>
    <property type="match status" value="1"/>
</dbReference>
<evidence type="ECO:0000250" key="1"/>
<evidence type="ECO:0000255" key="2"/>
<evidence type="ECO:0000256" key="3">
    <source>
        <dbReference type="SAM" id="MobiDB-lite"/>
    </source>
</evidence>
<evidence type="ECO:0000269" key="4">
    <source>
    </source>
</evidence>
<evidence type="ECO:0000269" key="5">
    <source>
    </source>
</evidence>
<evidence type="ECO:0000303" key="6">
    <source>
    </source>
</evidence>
<evidence type="ECO:0000305" key="7"/>
<reference key="1">
    <citation type="journal article" date="2007" name="BMC Genomics">
        <title>The full-ORF clone resource of the German cDNA consortium.</title>
        <authorList>
            <person name="Bechtel S."/>
            <person name="Rosenfelder H."/>
            <person name="Duda A."/>
            <person name="Schmidt C.P."/>
            <person name="Ernst U."/>
            <person name="Wellenreuther R."/>
            <person name="Mehrle A."/>
            <person name="Schuster C."/>
            <person name="Bahr A."/>
            <person name="Bloecker H."/>
            <person name="Heubner D."/>
            <person name="Hoerlein A."/>
            <person name="Michel G."/>
            <person name="Wedler H."/>
            <person name="Koehrer K."/>
            <person name="Ottenwaelder B."/>
            <person name="Poustka A."/>
            <person name="Wiemann S."/>
            <person name="Schupp I."/>
        </authorList>
    </citation>
    <scope>NUCLEOTIDE SEQUENCE [LARGE SCALE MRNA] (ISOFORM 2)</scope>
    <scope>VARIANT ARG-273</scope>
    <source>
        <tissue>Stomach</tissue>
    </source>
</reference>
<reference key="2">
    <citation type="journal article" date="2004" name="Nature">
        <title>The sequence and analysis of duplication-rich human chromosome 16.</title>
        <authorList>
            <person name="Martin J."/>
            <person name="Han C."/>
            <person name="Gordon L.A."/>
            <person name="Terry A."/>
            <person name="Prabhakar S."/>
            <person name="She X."/>
            <person name="Xie G."/>
            <person name="Hellsten U."/>
            <person name="Chan Y.M."/>
            <person name="Altherr M."/>
            <person name="Couronne O."/>
            <person name="Aerts A."/>
            <person name="Bajorek E."/>
            <person name="Black S."/>
            <person name="Blumer H."/>
            <person name="Branscomb E."/>
            <person name="Brown N.C."/>
            <person name="Bruno W.J."/>
            <person name="Buckingham J.M."/>
            <person name="Callen D.F."/>
            <person name="Campbell C.S."/>
            <person name="Campbell M.L."/>
            <person name="Campbell E.W."/>
            <person name="Caoile C."/>
            <person name="Challacombe J.F."/>
            <person name="Chasteen L.A."/>
            <person name="Chertkov O."/>
            <person name="Chi H.C."/>
            <person name="Christensen M."/>
            <person name="Clark L.M."/>
            <person name="Cohn J.D."/>
            <person name="Denys M."/>
            <person name="Detter J.C."/>
            <person name="Dickson M."/>
            <person name="Dimitrijevic-Bussod M."/>
            <person name="Escobar J."/>
            <person name="Fawcett J.J."/>
            <person name="Flowers D."/>
            <person name="Fotopulos D."/>
            <person name="Glavina T."/>
            <person name="Gomez M."/>
            <person name="Gonzales E."/>
            <person name="Goodstein D."/>
            <person name="Goodwin L.A."/>
            <person name="Grady D.L."/>
            <person name="Grigoriev I."/>
            <person name="Groza M."/>
            <person name="Hammon N."/>
            <person name="Hawkins T."/>
            <person name="Haydu L."/>
            <person name="Hildebrand C.E."/>
            <person name="Huang W."/>
            <person name="Israni S."/>
            <person name="Jett J."/>
            <person name="Jewett P.B."/>
            <person name="Kadner K."/>
            <person name="Kimball H."/>
            <person name="Kobayashi A."/>
            <person name="Krawczyk M.-C."/>
            <person name="Leyba T."/>
            <person name="Longmire J.L."/>
            <person name="Lopez F."/>
            <person name="Lou Y."/>
            <person name="Lowry S."/>
            <person name="Ludeman T."/>
            <person name="Manohar C.F."/>
            <person name="Mark G.A."/>
            <person name="McMurray K.L."/>
            <person name="Meincke L.J."/>
            <person name="Morgan J."/>
            <person name="Moyzis R.K."/>
            <person name="Mundt M.O."/>
            <person name="Munk A.C."/>
            <person name="Nandkeshwar R.D."/>
            <person name="Pitluck S."/>
            <person name="Pollard M."/>
            <person name="Predki P."/>
            <person name="Parson-Quintana B."/>
            <person name="Ramirez L."/>
            <person name="Rash S."/>
            <person name="Retterer J."/>
            <person name="Ricke D.O."/>
            <person name="Robinson D.L."/>
            <person name="Rodriguez A."/>
            <person name="Salamov A."/>
            <person name="Saunders E.H."/>
            <person name="Scott D."/>
            <person name="Shough T."/>
            <person name="Stallings R.L."/>
            <person name="Stalvey M."/>
            <person name="Sutherland R.D."/>
            <person name="Tapia R."/>
            <person name="Tesmer J.G."/>
            <person name="Thayer N."/>
            <person name="Thompson L.S."/>
            <person name="Tice H."/>
            <person name="Torney D.C."/>
            <person name="Tran-Gyamfi M."/>
            <person name="Tsai M."/>
            <person name="Ulanovsky L.E."/>
            <person name="Ustaszewska A."/>
            <person name="Vo N."/>
            <person name="White P.S."/>
            <person name="Williams A.L."/>
            <person name="Wills P.L."/>
            <person name="Wu J.-R."/>
            <person name="Wu K."/>
            <person name="Yang J."/>
            <person name="DeJong P."/>
            <person name="Bruce D."/>
            <person name="Doggett N.A."/>
            <person name="Deaven L."/>
            <person name="Schmutz J."/>
            <person name="Grimwood J."/>
            <person name="Richardson P."/>
            <person name="Rokhsar D.S."/>
            <person name="Eichler E.E."/>
            <person name="Gilna P."/>
            <person name="Lucas S.M."/>
            <person name="Myers R.M."/>
            <person name="Rubin E.M."/>
            <person name="Pennacchio L.A."/>
        </authorList>
    </citation>
    <scope>NUCLEOTIDE SEQUENCE [LARGE SCALE GENOMIC DNA]</scope>
</reference>
<reference key="3">
    <citation type="journal article" date="2004" name="Genome Res.">
        <title>The status, quality, and expansion of the NIH full-length cDNA project: the Mammalian Gene Collection (MGC).</title>
        <authorList>
            <consortium name="The MGC Project Team"/>
        </authorList>
    </citation>
    <scope>NUCLEOTIDE SEQUENCE [LARGE SCALE MRNA] (ISOFORM 1)</scope>
    <scope>VARIANTS GLU-55 AND ARG-273</scope>
</reference>
<proteinExistence type="evidence at protein level"/>
<protein>
    <recommendedName>
        <fullName>BICD family-like cargo adapter 2</fullName>
    </recommendedName>
    <alternativeName>
        <fullName>Bicaudal D-related protein 2</fullName>
        <shortName>BICD-related protein 2</shortName>
        <shortName>BICDR-2</shortName>
    </alternativeName>
    <alternativeName>
        <fullName>Coiled-coil domain-containing protein 64B</fullName>
    </alternativeName>
</protein>
<name>BICL2_HUMAN</name>